<accession>Q8CHC4</accession>
<proteinExistence type="evidence at protein level"/>
<name>SYNJ1_MOUSE</name>
<sequence>MAFSKGFRIYHKLDPPPFSLIVETRHKEECLMFESGAVAVLSSAEKEAIKGTYAKVLDAYGLLGVLRLNLGDTMLHYLVLVTGCMSVGKIQESEVFRVTSTEFISLRVDASDEDRISEVRKVLNSGNFYFAWSASGVSLDLSLNAHRSMQEHTTDNRFFWNQSLHLHLKHYGVNCDDWLLRLMCGGVEIRTIYAAHKQAKACLISRLSCERAGTRFNVRGTNDDGHVANFVETEQVIYLDDCVSSFIQIRGSVPLFWEQPGLQVGSHRVRMSRGFEANAPAFDRHFRTLKDLYGKQIVVNLLGSKEGEHMLSKAFQSHLKASEHASDIHMVSFDYHQMVKGGKAEKLHSILKPQVQKFLDYGFFYFDGSEVQRCQSGTVRTNCLDCLDRTNSVQAFLGLEMLAKQLEALGLAEKPQLVTRFQEVFRSMWSVNGDSISKIYAGTGALEGKAKLKDGARSVTRTIQNNFFDSSKQEAIDVLLLGNTLNSDLADKARALLTTGSLRVSEQTLQSASSKVLKNMCENFYKYSKPKKIRVCVGTWNVNGGKQFRSIAFKNQTLTDWLLDAPKLAGIQEFQDKRSKPTDIFAIGFEEMVELNAGNIVNASTTNQKLWAVELQKTISRDNKYVLLASEQLVGVCLFVFIRPQHAPFIRDVAVDTVKTGMGGATGNKGAVAIRMLFHTTSLCFVCSHFAAGQSQVKERNEDFVEIARKLSFPMGRMLFSHDYVFWCGDFNYRIDLPNEEVKELIRQQNWDSLIAGDQLINQKNAGQIFRGFLEGKVTFAPTYKYDLFSEDYDTSEKCRTPAWTDRVLWRRRKWPFDRSAEDLDLLNASFQDESKILYTWTPGTLLHYGRAELKTSDHRPVVALIDIDIFEVEAEERQKIYKEVIAVQGPPDGTVLVSIKSSAQESTFFDDALIDELLRQFAHFGEVILIRFVEDKMWVTFLEGSSALNALSLNGKELLNRTITITLKSPDWIKHLEEEMSLEKISVTLPSSASSTLLGEDAEVAADFDMEGDVDDYSAEVEELLPQHLQPSSSSGLGTSPSSSPRTSPCQSPTVPEYSAPSLPIRPSRAPSRTPGPPSSQGSPVDTQPAAQKDSSQTLEPKRPPPPRPVAPPARPAPPQRPPPPSGARSPAPARKEFGGVGAPPSPGVARREIEAPKSPGTARKDNIGRNQPSPQAGLAGPGPAGYGAARPTIPARAGVISAPQSQARVCAGRPTPDSQSKPSETLKGPAVLPEPLKPQAAFPQQPSLPTPAQKLQDPLVPIAAPTMPPSGPQPNLETPPQPPPRSRSSQSLPSDSSPQLQQEQPTGQVKINGISGVKQEPTLKSDPFEDLSLSVLAVSKAQPSVQISPVLTPDPKMLIQLPSASQSQVNPLSSVSCMPTRPPGPEESKSQESMGSSANPFPSLPCRNPFTDRTAAPGNPFRVQSQESEATSWLSKEEPVPNSPFPPLMPLSHDTSKASSSLGGFEDNFDLQSQSTVKTSNPKGWVTFDEDDNFPTTGKSKSVCPDLVGNAPASFDDDWSKGASVSFCVLPARRPPPPPPPVPLLPPGTTSSAGPSTTLPSKAPSTLDFTER</sequence>
<dbReference type="EC" id="3.1.3.36" evidence="1"/>
<dbReference type="EMBL" id="AB093272">
    <property type="protein sequence ID" value="BAC41456.2"/>
    <property type="status" value="ALT_INIT"/>
    <property type="molecule type" value="Transcribed_RNA"/>
</dbReference>
<dbReference type="SMR" id="Q8CHC4"/>
<dbReference type="FunCoup" id="Q8CHC4">
    <property type="interactions" value="1218"/>
</dbReference>
<dbReference type="IntAct" id="Q8CHC4">
    <property type="interactions" value="8"/>
</dbReference>
<dbReference type="MINT" id="Q8CHC4"/>
<dbReference type="STRING" id="10090.ENSMUSP00000113308"/>
<dbReference type="GlyGen" id="Q8CHC4">
    <property type="glycosylation" value="8 sites, 1 O-linked glycan (6 sites)"/>
</dbReference>
<dbReference type="iPTMnet" id="Q8CHC4"/>
<dbReference type="PhosphoSitePlus" id="Q8CHC4"/>
<dbReference type="SwissPalm" id="Q8CHC4"/>
<dbReference type="PaxDb" id="10090-ENSMUSP00000113308"/>
<dbReference type="PeptideAtlas" id="Q8CHC4"/>
<dbReference type="ProteomicsDB" id="263188"/>
<dbReference type="Pumba" id="Q8CHC4"/>
<dbReference type="UCSC" id="uc007zww.2">
    <property type="organism name" value="mouse"/>
</dbReference>
<dbReference type="AGR" id="MGI:1354961"/>
<dbReference type="MGI" id="MGI:1354961">
    <property type="gene designation" value="Synj1"/>
</dbReference>
<dbReference type="eggNOG" id="KOG0566">
    <property type="taxonomic scope" value="Eukaryota"/>
</dbReference>
<dbReference type="InParanoid" id="Q8CHC4"/>
<dbReference type="OrthoDB" id="1925875at2759"/>
<dbReference type="PhylomeDB" id="Q8CHC4"/>
<dbReference type="Reactome" id="R-MMU-1660499">
    <property type="pathway name" value="Synthesis of PIPs at the plasma membrane"/>
</dbReference>
<dbReference type="Reactome" id="R-MMU-1855183">
    <property type="pathway name" value="Synthesis of IP2, IP, and Ins in the cytosol"/>
</dbReference>
<dbReference type="Reactome" id="R-MMU-1855204">
    <property type="pathway name" value="Synthesis of IP3 and IP4 in the cytosol"/>
</dbReference>
<dbReference type="Reactome" id="R-MMU-8856828">
    <property type="pathway name" value="Clathrin-mediated endocytosis"/>
</dbReference>
<dbReference type="CD-CODE" id="CE726F99">
    <property type="entry name" value="Postsynaptic density"/>
</dbReference>
<dbReference type="ChiTaRS" id="Synj1">
    <property type="organism name" value="mouse"/>
</dbReference>
<dbReference type="PRO" id="PR:Q8CHC4"/>
<dbReference type="Proteomes" id="UP000000589">
    <property type="component" value="Unplaced"/>
</dbReference>
<dbReference type="RNAct" id="Q8CHC4">
    <property type="molecule type" value="protein"/>
</dbReference>
<dbReference type="GO" id="GO:0030118">
    <property type="term" value="C:clathrin coat"/>
    <property type="evidence" value="ECO:0000304"/>
    <property type="project" value="MGI"/>
</dbReference>
<dbReference type="GO" id="GO:0030132">
    <property type="term" value="C:clathrin coat of coated pit"/>
    <property type="evidence" value="ECO:0000250"/>
    <property type="project" value="BHF-UCL"/>
</dbReference>
<dbReference type="GO" id="GO:0098978">
    <property type="term" value="C:glutamatergic synapse"/>
    <property type="evidence" value="ECO:0000314"/>
    <property type="project" value="SynGO"/>
</dbReference>
<dbReference type="GO" id="GO:0030117">
    <property type="term" value="C:membrane coat"/>
    <property type="evidence" value="ECO:0000314"/>
    <property type="project" value="MGI"/>
</dbReference>
<dbReference type="GO" id="GO:0048471">
    <property type="term" value="C:perinuclear region of cytoplasm"/>
    <property type="evidence" value="ECO:0000250"/>
    <property type="project" value="UniProtKB"/>
</dbReference>
<dbReference type="GO" id="GO:0098685">
    <property type="term" value="C:Schaffer collateral - CA1 synapse"/>
    <property type="evidence" value="ECO:0000314"/>
    <property type="project" value="SynGO"/>
</dbReference>
<dbReference type="GO" id="GO:0097060">
    <property type="term" value="C:synaptic membrane"/>
    <property type="evidence" value="ECO:0000250"/>
    <property type="project" value="BHF-UCL"/>
</dbReference>
<dbReference type="GO" id="GO:0043195">
    <property type="term" value="C:terminal bouton"/>
    <property type="evidence" value="ECO:0000250"/>
    <property type="project" value="ParkinsonsUK-UCL"/>
</dbReference>
<dbReference type="GO" id="GO:0012506">
    <property type="term" value="C:vesicle membrane"/>
    <property type="evidence" value="ECO:0000250"/>
    <property type="project" value="ParkinsonsUK-UCL"/>
</dbReference>
<dbReference type="GO" id="GO:0034595">
    <property type="term" value="F:phosphatidylinositol phosphate 5-phosphatase activity"/>
    <property type="evidence" value="ECO:0000315"/>
    <property type="project" value="MGI"/>
</dbReference>
<dbReference type="GO" id="GO:0004439">
    <property type="term" value="F:phosphatidylinositol-4,5-bisphosphate 5-phosphatase activity"/>
    <property type="evidence" value="ECO:0000315"/>
    <property type="project" value="MGI"/>
</dbReference>
<dbReference type="GO" id="GO:0003723">
    <property type="term" value="F:RNA binding"/>
    <property type="evidence" value="ECO:0007669"/>
    <property type="project" value="UniProtKB-KW"/>
</dbReference>
<dbReference type="GO" id="GO:0007612">
    <property type="term" value="P:learning"/>
    <property type="evidence" value="ECO:0000315"/>
    <property type="project" value="MGI"/>
</dbReference>
<dbReference type="GO" id="GO:0006836">
    <property type="term" value="P:neurotransmitter transport"/>
    <property type="evidence" value="ECO:0000315"/>
    <property type="project" value="MGI"/>
</dbReference>
<dbReference type="GO" id="GO:0046856">
    <property type="term" value="P:phosphatidylinositol dephosphorylation"/>
    <property type="evidence" value="ECO:0000315"/>
    <property type="project" value="MGI"/>
</dbReference>
<dbReference type="GO" id="GO:0046488">
    <property type="term" value="P:phosphatidylinositol metabolic process"/>
    <property type="evidence" value="ECO:0000315"/>
    <property type="project" value="MGI"/>
</dbReference>
<dbReference type="GO" id="GO:0048015">
    <property type="term" value="P:phosphatidylinositol-mediated signaling"/>
    <property type="evidence" value="ECO:0000304"/>
    <property type="project" value="MGI"/>
</dbReference>
<dbReference type="GO" id="GO:1903423">
    <property type="term" value="P:positive regulation of synaptic vesicle recycling"/>
    <property type="evidence" value="ECO:0000304"/>
    <property type="project" value="BHF-UCL"/>
</dbReference>
<dbReference type="GO" id="GO:0099149">
    <property type="term" value="P:regulation of postsynaptic neurotransmitter receptor internalization"/>
    <property type="evidence" value="ECO:0000314"/>
    <property type="project" value="SynGO"/>
</dbReference>
<dbReference type="GO" id="GO:0048488">
    <property type="term" value="P:synaptic vesicle endocytosis"/>
    <property type="evidence" value="ECO:0000315"/>
    <property type="project" value="MGI"/>
</dbReference>
<dbReference type="GO" id="GO:0016082">
    <property type="term" value="P:synaptic vesicle priming"/>
    <property type="evidence" value="ECO:0000315"/>
    <property type="project" value="MGI"/>
</dbReference>
<dbReference type="GO" id="GO:0048489">
    <property type="term" value="P:synaptic vesicle transport"/>
    <property type="evidence" value="ECO:0000315"/>
    <property type="project" value="MGI"/>
</dbReference>
<dbReference type="GO" id="GO:0016191">
    <property type="term" value="P:synaptic vesicle uncoating"/>
    <property type="evidence" value="ECO:0000314"/>
    <property type="project" value="SynGO"/>
</dbReference>
<dbReference type="CDD" id="cd09098">
    <property type="entry name" value="INPP5c_Synj1"/>
    <property type="match status" value="1"/>
</dbReference>
<dbReference type="CDD" id="cd12719">
    <property type="entry name" value="RRM_SYNJ1"/>
    <property type="match status" value="1"/>
</dbReference>
<dbReference type="FunFam" id="3.30.70.330:FF:000076">
    <property type="entry name" value="Synaptojanin-1 isoform 1"/>
    <property type="match status" value="1"/>
</dbReference>
<dbReference type="FunFam" id="3.60.10.10:FF:000003">
    <property type="entry name" value="Synaptojanin-1 isoform 1"/>
    <property type="match status" value="1"/>
</dbReference>
<dbReference type="Gene3D" id="3.30.70.330">
    <property type="match status" value="1"/>
</dbReference>
<dbReference type="Gene3D" id="3.60.10.10">
    <property type="entry name" value="Endonuclease/exonuclease/phosphatase"/>
    <property type="match status" value="1"/>
</dbReference>
<dbReference type="InterPro" id="IPR036691">
    <property type="entry name" value="Endo/exonu/phosph_ase_sf"/>
</dbReference>
<dbReference type="InterPro" id="IPR046985">
    <property type="entry name" value="IP5"/>
</dbReference>
<dbReference type="InterPro" id="IPR000300">
    <property type="entry name" value="IPPc"/>
</dbReference>
<dbReference type="InterPro" id="IPR012677">
    <property type="entry name" value="Nucleotide-bd_a/b_plait_sf"/>
</dbReference>
<dbReference type="InterPro" id="IPR035979">
    <property type="entry name" value="RBD_domain_sf"/>
</dbReference>
<dbReference type="InterPro" id="IPR000504">
    <property type="entry name" value="RRM_dom"/>
</dbReference>
<dbReference type="InterPro" id="IPR002013">
    <property type="entry name" value="SAC_dom"/>
</dbReference>
<dbReference type="InterPro" id="IPR015047">
    <property type="entry name" value="SYNJ1/2_RRM"/>
</dbReference>
<dbReference type="InterPro" id="IPR034971">
    <property type="entry name" value="SYNJ1_RRM"/>
</dbReference>
<dbReference type="PANTHER" id="PTHR11200">
    <property type="entry name" value="INOSITOL 5-PHOSPHATASE"/>
    <property type="match status" value="1"/>
</dbReference>
<dbReference type="PANTHER" id="PTHR11200:SF158">
    <property type="entry name" value="SYNAPTOJANIN-1"/>
    <property type="match status" value="1"/>
</dbReference>
<dbReference type="Pfam" id="PF08952">
    <property type="entry name" value="DUF1866"/>
    <property type="match status" value="1"/>
</dbReference>
<dbReference type="Pfam" id="PF22669">
    <property type="entry name" value="Exo_endo_phos2"/>
    <property type="match status" value="1"/>
</dbReference>
<dbReference type="Pfam" id="PF02383">
    <property type="entry name" value="Syja_N"/>
    <property type="match status" value="1"/>
</dbReference>
<dbReference type="SMART" id="SM01165">
    <property type="entry name" value="DUF1866"/>
    <property type="match status" value="1"/>
</dbReference>
<dbReference type="SMART" id="SM00128">
    <property type="entry name" value="IPPc"/>
    <property type="match status" value="1"/>
</dbReference>
<dbReference type="SUPFAM" id="SSF56219">
    <property type="entry name" value="DNase I-like"/>
    <property type="match status" value="1"/>
</dbReference>
<dbReference type="SUPFAM" id="SSF54928">
    <property type="entry name" value="RNA-binding domain, RBD"/>
    <property type="match status" value="1"/>
</dbReference>
<dbReference type="PROSITE" id="PS50102">
    <property type="entry name" value="RRM"/>
    <property type="match status" value="1"/>
</dbReference>
<dbReference type="PROSITE" id="PS50275">
    <property type="entry name" value="SAC"/>
    <property type="match status" value="1"/>
</dbReference>
<keyword id="KW-0963">Cytoplasm</keyword>
<keyword id="KW-0254">Endocytosis</keyword>
<keyword id="KW-0378">Hydrolase</keyword>
<keyword id="KW-0443">Lipid metabolism</keyword>
<keyword id="KW-0488">Methylation</keyword>
<keyword id="KW-0597">Phosphoprotein</keyword>
<keyword id="KW-1185">Reference proteome</keyword>
<keyword id="KW-0677">Repeat</keyword>
<keyword id="KW-0694">RNA-binding</keyword>
<gene>
    <name type="primary">Synj1</name>
    <name type="synonym">Kiaa0910</name>
</gene>
<feature type="chain" id="PRO_0000209731" description="Synaptojanin-1">
    <location>
        <begin position="1"/>
        <end position="1574"/>
    </location>
</feature>
<feature type="domain" description="SAC" evidence="5">
    <location>
        <begin position="119"/>
        <end position="442"/>
    </location>
</feature>
<feature type="domain" description="RRM" evidence="4">
    <location>
        <begin position="894"/>
        <end position="971"/>
    </location>
</feature>
<feature type="region of interest" description="Disordered" evidence="6">
    <location>
        <begin position="1029"/>
        <end position="1327"/>
    </location>
</feature>
<feature type="region of interest" description="Disordered" evidence="6">
    <location>
        <begin position="1363"/>
        <end position="1507"/>
    </location>
</feature>
<feature type="region of interest" description="3 X 3 AA repeats of N-P-F" evidence="3">
    <location>
        <begin position="1403"/>
        <end position="1425"/>
    </location>
</feature>
<feature type="region of interest" description="Disordered" evidence="6">
    <location>
        <begin position="1532"/>
        <end position="1574"/>
    </location>
</feature>
<feature type="compositionally biased region" description="Low complexity" evidence="6">
    <location>
        <begin position="1029"/>
        <end position="1054"/>
    </location>
</feature>
<feature type="compositionally biased region" description="Polar residues" evidence="6">
    <location>
        <begin position="1080"/>
        <end position="1100"/>
    </location>
</feature>
<feature type="compositionally biased region" description="Pro residues" evidence="6">
    <location>
        <begin position="1105"/>
        <end position="1127"/>
    </location>
</feature>
<feature type="compositionally biased region" description="Pro residues" evidence="6">
    <location>
        <begin position="1268"/>
        <end position="1287"/>
    </location>
</feature>
<feature type="compositionally biased region" description="Low complexity" evidence="6">
    <location>
        <begin position="1288"/>
        <end position="1307"/>
    </location>
</feature>
<feature type="compositionally biased region" description="Polar residues" evidence="6">
    <location>
        <begin position="1364"/>
        <end position="1379"/>
    </location>
</feature>
<feature type="compositionally biased region" description="Polar residues" evidence="6">
    <location>
        <begin position="1393"/>
        <end position="1402"/>
    </location>
</feature>
<feature type="compositionally biased region" description="Polar residues" evidence="6">
    <location>
        <begin position="1424"/>
        <end position="1436"/>
    </location>
</feature>
<feature type="compositionally biased region" description="Polar residues" evidence="6">
    <location>
        <begin position="1472"/>
        <end position="1484"/>
    </location>
</feature>
<feature type="compositionally biased region" description="Pro residues" evidence="6">
    <location>
        <begin position="1535"/>
        <end position="1548"/>
    </location>
</feature>
<feature type="compositionally biased region" description="Low complexity" evidence="6">
    <location>
        <begin position="1549"/>
        <end position="1563"/>
    </location>
</feature>
<feature type="compositionally biased region" description="Polar residues" evidence="6">
    <location>
        <begin position="1565"/>
        <end position="1574"/>
    </location>
</feature>
<feature type="modified residue" description="Phosphoserine" evidence="9">
    <location>
        <position position="820"/>
    </location>
</feature>
<feature type="modified residue" description="Phosphoserine" evidence="9">
    <location>
        <position position="830"/>
    </location>
</feature>
<feature type="modified residue" description="Phosphoserine" evidence="3">
    <location>
        <position position="1053"/>
    </location>
</feature>
<feature type="modified residue" description="Phosphoserine" evidence="9">
    <location>
        <position position="1147"/>
    </location>
</feature>
<feature type="modified residue" description="Phosphoserine" evidence="3">
    <location>
        <position position="1175"/>
    </location>
</feature>
<feature type="modified residue" description="Omega-N-methylarginine" evidence="10">
    <location>
        <position position="1198"/>
    </location>
</feature>
<feature type="modified residue" description="Phosphothreonine" evidence="2">
    <location>
        <position position="1217"/>
    </location>
</feature>
<feature type="modified residue" description="Phosphoserine" evidence="2">
    <location>
        <position position="1290"/>
    </location>
</feature>
<feature type="modified residue" description="Phosphoserine" evidence="9">
    <location>
        <position position="1350"/>
    </location>
</feature>
<feature type="modified residue" description="Phosphothreonine" evidence="9">
    <location>
        <position position="1354"/>
    </location>
</feature>
<reference key="1">
    <citation type="journal article" date="2002" name="DNA Res.">
        <title>Prediction of the coding sequences of mouse homologues of KIAA gene: I. The complete nucleotide sequences of 100 mouse KIAA-homologous cDNAs identified by screening of terminal sequences of cDNA clones randomly sampled from size-fractionated libraries.</title>
        <authorList>
            <person name="Okazaki N."/>
            <person name="Kikuno R."/>
            <person name="Ohara R."/>
            <person name="Inamoto S."/>
            <person name="Hara Y."/>
            <person name="Nagase T."/>
            <person name="Ohara O."/>
            <person name="Koga H."/>
        </authorList>
    </citation>
    <scope>NUCLEOTIDE SEQUENCE [LARGE SCALE MRNA]</scope>
    <source>
        <tissue>Brain</tissue>
    </source>
</reference>
<reference key="2">
    <citation type="submission" date="2003-08" db="EMBL/GenBank/DDBJ databases">
        <authorList>
            <person name="Okazaki N."/>
            <person name="Kikuno R."/>
            <person name="Nagase T."/>
            <person name="Ohara O."/>
            <person name="Koga H."/>
        </authorList>
    </citation>
    <scope>SEQUENCE REVISION</scope>
</reference>
<reference key="3">
    <citation type="journal article" date="2000" name="J. Cell Sci.">
        <title>All three PACSIN isoforms bind to endocytic proteins and inhibit endocytosis.</title>
        <authorList>
            <person name="Modregger J."/>
            <person name="Ritter B."/>
            <person name="Witter B."/>
            <person name="Paulsson M."/>
            <person name="Plomann M."/>
        </authorList>
    </citation>
    <scope>INTERACTION WITH PACSIN1; PACSIN2 AND PACSIN3</scope>
</reference>
<reference key="4">
    <citation type="journal article" date="2007" name="Mol. Cell. Proteomics">
        <title>Qualitative and quantitative analyses of protein phosphorylation in naive and stimulated mouse synaptosomal preparations.</title>
        <authorList>
            <person name="Munton R.P."/>
            <person name="Tweedie-Cullen R."/>
            <person name="Livingstone-Zatchej M."/>
            <person name="Weinandy F."/>
            <person name="Waidelich M."/>
            <person name="Longo D."/>
            <person name="Gehrig P."/>
            <person name="Potthast F."/>
            <person name="Rutishauser D."/>
            <person name="Gerrits B."/>
            <person name="Panse C."/>
            <person name="Schlapbach R."/>
            <person name="Mansuy I.M."/>
        </authorList>
    </citation>
    <scope>IDENTIFICATION BY MASS SPECTROMETRY [LARGE SCALE ANALYSIS]</scope>
    <source>
        <tissue>Brain cortex</tissue>
    </source>
</reference>
<reference key="5">
    <citation type="journal article" date="2008" name="J. Proteome Res.">
        <title>Large-scale identification and evolution indexing of tyrosine phosphorylation sites from murine brain.</title>
        <authorList>
            <person name="Ballif B.A."/>
            <person name="Carey G.R."/>
            <person name="Sunyaev S.R."/>
            <person name="Gygi S.P."/>
        </authorList>
    </citation>
    <scope>IDENTIFICATION BY MASS SPECTROMETRY [LARGE SCALE ANALYSIS]</scope>
    <source>
        <tissue>Brain</tissue>
    </source>
</reference>
<reference key="6">
    <citation type="journal article" date="2010" name="Cell">
        <title>A tissue-specific atlas of mouse protein phosphorylation and expression.</title>
        <authorList>
            <person name="Huttlin E.L."/>
            <person name="Jedrychowski M.P."/>
            <person name="Elias J.E."/>
            <person name="Goswami T."/>
            <person name="Rad R."/>
            <person name="Beausoleil S.A."/>
            <person name="Villen J."/>
            <person name="Haas W."/>
            <person name="Sowa M.E."/>
            <person name="Gygi S.P."/>
        </authorList>
    </citation>
    <scope>PHOSPHORYLATION [LARGE SCALE ANALYSIS] AT SER-820; SER-830; SER-1147; SER-1350 AND THR-1354</scope>
    <scope>IDENTIFICATION BY MASS SPECTROMETRY [LARGE SCALE ANALYSIS]</scope>
    <source>
        <tissue>Brain</tissue>
        <tissue>Brown adipose tissue</tissue>
        <tissue>Heart</tissue>
        <tissue>Kidney</tissue>
        <tissue>Liver</tissue>
        <tissue>Lung</tissue>
        <tissue>Spleen</tissue>
        <tissue>Testis</tissue>
    </source>
</reference>
<reference key="7">
    <citation type="journal article" date="2014" name="Mol. Cell. Proteomics">
        <title>Immunoaffinity enrichment and mass spectrometry analysis of protein methylation.</title>
        <authorList>
            <person name="Guo A."/>
            <person name="Gu H."/>
            <person name="Zhou J."/>
            <person name="Mulhern D."/>
            <person name="Wang Y."/>
            <person name="Lee K.A."/>
            <person name="Yang V."/>
            <person name="Aguiar M."/>
            <person name="Kornhauser J."/>
            <person name="Jia X."/>
            <person name="Ren J."/>
            <person name="Beausoleil S.A."/>
            <person name="Silva J.C."/>
            <person name="Vemulapalli V."/>
            <person name="Bedford M.T."/>
            <person name="Comb M.J."/>
        </authorList>
    </citation>
    <scope>METHYLATION [LARGE SCALE ANALYSIS] AT ARG-1198</scope>
    <scope>IDENTIFICATION BY MASS SPECTROMETRY [LARGE SCALE ANALYSIS]</scope>
    <source>
        <tissue>Brain</tissue>
    </source>
</reference>
<protein>
    <recommendedName>
        <fullName>Synaptojanin-1</fullName>
        <ecNumber evidence="1">3.1.3.36</ecNumber>
    </recommendedName>
    <alternativeName>
        <fullName>Synaptic inositol 1,4,5-trisphosphate 5-phosphatase 1</fullName>
    </alternativeName>
</protein>
<organism>
    <name type="scientific">Mus musculus</name>
    <name type="common">Mouse</name>
    <dbReference type="NCBI Taxonomy" id="10090"/>
    <lineage>
        <taxon>Eukaryota</taxon>
        <taxon>Metazoa</taxon>
        <taxon>Chordata</taxon>
        <taxon>Craniata</taxon>
        <taxon>Vertebrata</taxon>
        <taxon>Euteleostomi</taxon>
        <taxon>Mammalia</taxon>
        <taxon>Eutheria</taxon>
        <taxon>Euarchontoglires</taxon>
        <taxon>Glires</taxon>
        <taxon>Rodentia</taxon>
        <taxon>Myomorpha</taxon>
        <taxon>Muroidea</taxon>
        <taxon>Muridae</taxon>
        <taxon>Murinae</taxon>
        <taxon>Mus</taxon>
        <taxon>Mus</taxon>
    </lineage>
</organism>
<evidence type="ECO:0000250" key="1">
    <source>
        <dbReference type="UniProtKB" id="O18964"/>
    </source>
</evidence>
<evidence type="ECO:0000250" key="2">
    <source>
        <dbReference type="UniProtKB" id="O43426"/>
    </source>
</evidence>
<evidence type="ECO:0000250" key="3">
    <source>
        <dbReference type="UniProtKB" id="Q62910"/>
    </source>
</evidence>
<evidence type="ECO:0000255" key="4">
    <source>
        <dbReference type="PROSITE-ProRule" id="PRU00176"/>
    </source>
</evidence>
<evidence type="ECO:0000255" key="5">
    <source>
        <dbReference type="PROSITE-ProRule" id="PRU00183"/>
    </source>
</evidence>
<evidence type="ECO:0000256" key="6">
    <source>
        <dbReference type="SAM" id="MobiDB-lite"/>
    </source>
</evidence>
<evidence type="ECO:0000269" key="7">
    <source>
    </source>
</evidence>
<evidence type="ECO:0000305" key="8"/>
<evidence type="ECO:0007744" key="9">
    <source>
    </source>
</evidence>
<evidence type="ECO:0007744" key="10">
    <source>
    </source>
</evidence>
<comment type="function">
    <text evidence="1 3">Phosphatase that acts on various phosphoinositides, including phosphatidylinositol 4-phosphate, phosphatidylinositol (4,5)-bisphosphate and phosphatidylinositol (3,4,5)-trisphosphate (By similarity). Has a role in clathrin-mediated endocytosis (By similarity). Hydrolyzes PIP2 bound to actin regulatory proteins resulting in the rearrangement of actin filaments downstream of tyrosine kinase and ASH/GRB2 (By similarity).</text>
</comment>
<comment type="catalytic activity">
    <reaction evidence="1">
        <text>a 1,2-diacyl-sn-glycero-3-phospho-(1D-myo-inositol-4,5-bisphosphate) + H2O = a 1,2-diacyl-sn-glycero-3-phospho-(1D-myo-inositol 4-phosphate) + phosphate</text>
        <dbReference type="Rhea" id="RHEA:22764"/>
        <dbReference type="ChEBI" id="CHEBI:15377"/>
        <dbReference type="ChEBI" id="CHEBI:43474"/>
        <dbReference type="ChEBI" id="CHEBI:58178"/>
        <dbReference type="ChEBI" id="CHEBI:58456"/>
        <dbReference type="EC" id="3.1.3.36"/>
    </reaction>
</comment>
<comment type="subunit">
    <text evidence="1 3 7">Interacts with ASH/GRB2 (By similarity). Interacts with PACSIN1, PACSIN2 and PACSIN3 (PubMed:11082044). Interacts with AMPH, SH3GL1, SH3GL2 and SH3GL3. Interacts with MYO1E (via SH3 domain). Interacts with BIN1 and DNM1. Interacts with EPS15 (By similarity).</text>
</comment>
<comment type="subcellular location">
    <subcellularLocation>
        <location evidence="1">Cytoplasm</location>
        <location evidence="1">Perinuclear region</location>
    </subcellularLocation>
</comment>
<comment type="domain">
    <text evidence="3">Interacts with EPS15 (a clathrin coat-associated protein) via a C-terminal domain containing three Asn-Pro-Phe (NPF) repeats.</text>
</comment>
<comment type="domain">
    <text evidence="3">The C-terminal proline-rich region mediates binding to a variety of SH3 domain-containing proteins including AMPH, SH3GL1, SH3GL2 and SH3GL3.</text>
</comment>
<comment type="similarity">
    <text evidence="8">Belongs to the synaptojanin family.</text>
</comment>
<comment type="similarity">
    <text evidence="8">In the central section; belongs to the inositol 1,4,5-trisphosphate 5-phosphatase family.</text>
</comment>
<comment type="sequence caution" evidence="8">
    <conflict type="erroneous initiation">
        <sequence resource="EMBL-CDS" id="BAC41456"/>
    </conflict>
    <text>Extended N-terminus.</text>
</comment>